<keyword id="KW-0968">Cytoplasmic vesicle</keyword>
<keyword id="KW-0256">Endoplasmic reticulum</keyword>
<keyword id="KW-0931">ER-Golgi transport</keyword>
<keyword id="KW-0333">Golgi apparatus</keyword>
<keyword id="KW-0342">GTP-binding</keyword>
<keyword id="KW-0378">Hydrolase</keyword>
<keyword id="KW-0472">Membrane</keyword>
<keyword id="KW-0547">Nucleotide-binding</keyword>
<keyword id="KW-0653">Protein transport</keyword>
<keyword id="KW-1185">Reference proteome</keyword>
<keyword id="KW-0813">Transport</keyword>
<comment type="function">
    <text evidence="1">Small GTPase component of the coat protein complex II (COPII) which promotes the formation of transport vesicles from the endoplasmic reticulum (ER). The coat has two main functions, the physical deformation of the endoplasmic reticulum membrane into vesicles and the selection of cargo molecules. Sar1 controls the coat assembly in a stepwise manner. Activated Sar1-GTP binds to membranes first and recruits the sec23/24 complex. These sec23/24-sar1 prebudding intermediates are then collected by the Sec13/31 complex as subunits polymerize to form coated transport vesicles. Conversion to sar1-GDP triggers coat release and recycles COPII subunits (By similarity).</text>
</comment>
<comment type="catalytic activity">
    <reaction>
        <text>GTP + H2O = GDP + phosphate + H(+)</text>
        <dbReference type="Rhea" id="RHEA:19669"/>
        <dbReference type="ChEBI" id="CHEBI:15377"/>
        <dbReference type="ChEBI" id="CHEBI:15378"/>
        <dbReference type="ChEBI" id="CHEBI:37565"/>
        <dbReference type="ChEBI" id="CHEBI:43474"/>
        <dbReference type="ChEBI" id="CHEBI:58189"/>
    </reaction>
</comment>
<comment type="subunit">
    <text evidence="1">COPII is composed of at least 5 proteins: the sec23/24 complex, the sec13/31 complex and sar1.</text>
</comment>
<comment type="subcellular location">
    <subcellularLocation>
        <location evidence="1">Cytoplasmic vesicle</location>
        <location evidence="1">COPII-coated vesicle membrane</location>
        <topology evidence="1">Peripheral membrane protein</topology>
        <orientation evidence="1">Cytoplasmic side</orientation>
    </subcellularLocation>
    <subcellularLocation>
        <location evidence="1">Endoplasmic reticulum membrane</location>
        <topology evidence="1">Peripheral membrane protein</topology>
        <orientation evidence="1">Cytoplasmic side</orientation>
    </subcellularLocation>
    <subcellularLocation>
        <location evidence="1">Golgi apparatus membrane</location>
        <topology evidence="1">Peripheral membrane protein</topology>
        <orientation evidence="1">Cytoplasmic side</orientation>
    </subcellularLocation>
</comment>
<comment type="similarity">
    <text evidence="2">Belongs to the small GTPase superfamily. SAR1 family.</text>
</comment>
<organism>
    <name type="scientific">Aspergillus clavatus (strain ATCC 1007 / CBS 513.65 / DSM 816 / NCTC 3887 / NRRL 1 / QM 1276 / 107)</name>
    <dbReference type="NCBI Taxonomy" id="344612"/>
    <lineage>
        <taxon>Eukaryota</taxon>
        <taxon>Fungi</taxon>
        <taxon>Dikarya</taxon>
        <taxon>Ascomycota</taxon>
        <taxon>Pezizomycotina</taxon>
        <taxon>Eurotiomycetes</taxon>
        <taxon>Eurotiomycetidae</taxon>
        <taxon>Eurotiales</taxon>
        <taxon>Aspergillaceae</taxon>
        <taxon>Aspergillus</taxon>
        <taxon>Aspergillus subgen. Fumigati</taxon>
    </lineage>
</organism>
<proteinExistence type="inferred from homology"/>
<reference key="1">
    <citation type="journal article" date="2008" name="PLoS Genet.">
        <title>Genomic islands in the pathogenic filamentous fungus Aspergillus fumigatus.</title>
        <authorList>
            <person name="Fedorova N.D."/>
            <person name="Khaldi N."/>
            <person name="Joardar V.S."/>
            <person name="Maiti R."/>
            <person name="Amedeo P."/>
            <person name="Anderson M.J."/>
            <person name="Crabtree J."/>
            <person name="Silva J.C."/>
            <person name="Badger J.H."/>
            <person name="Albarraq A."/>
            <person name="Angiuoli S."/>
            <person name="Bussey H."/>
            <person name="Bowyer P."/>
            <person name="Cotty P.J."/>
            <person name="Dyer P.S."/>
            <person name="Egan A."/>
            <person name="Galens K."/>
            <person name="Fraser-Liggett C.M."/>
            <person name="Haas B.J."/>
            <person name="Inman J.M."/>
            <person name="Kent R."/>
            <person name="Lemieux S."/>
            <person name="Malavazi I."/>
            <person name="Orvis J."/>
            <person name="Roemer T."/>
            <person name="Ronning C.M."/>
            <person name="Sundaram J.P."/>
            <person name="Sutton G."/>
            <person name="Turner G."/>
            <person name="Venter J.C."/>
            <person name="White O.R."/>
            <person name="Whitty B.R."/>
            <person name="Youngman P."/>
            <person name="Wolfe K.H."/>
            <person name="Goldman G.H."/>
            <person name="Wortman J.R."/>
            <person name="Jiang B."/>
            <person name="Denning D.W."/>
            <person name="Nierman W.C."/>
        </authorList>
    </citation>
    <scope>NUCLEOTIDE SEQUENCE [LARGE SCALE GENOMIC DNA]</scope>
    <source>
        <strain>ATCC 1007 / CBS 513.65 / DSM 816 / NCTC 3887 / NRRL 1 / QM 1276 / 107</strain>
    </source>
</reference>
<feature type="chain" id="PRO_0000295506" description="Small COPII coat GTPase sar1">
    <location>
        <begin position="1"/>
        <end position="189"/>
    </location>
</feature>
<feature type="binding site" evidence="1">
    <location>
        <begin position="27"/>
        <end position="34"/>
    </location>
    <ligand>
        <name>GTP</name>
        <dbReference type="ChEBI" id="CHEBI:37565"/>
    </ligand>
</feature>
<feature type="binding site" evidence="1">
    <location>
        <begin position="70"/>
        <end position="73"/>
    </location>
    <ligand>
        <name>GTP</name>
        <dbReference type="ChEBI" id="CHEBI:37565"/>
    </ligand>
</feature>
<feature type="binding site" evidence="1">
    <location>
        <begin position="129"/>
        <end position="132"/>
    </location>
    <ligand>
        <name>GTP</name>
        <dbReference type="ChEBI" id="CHEBI:37565"/>
    </ligand>
</feature>
<sequence>MWIINWFYDVLASLGLLNKHAKLLFLGLDNAGKTTLLHMLKNDRVATLQPTAHPTSEELAIGNNRFTTFDLGGHQQARRLWKDYFPEVSGIVFLVDAKDHERFPESKAELDALLAMEELSKVPFLILGNKIDHPDAVSEDELRHQLGLYQTTGKGKVPLEGIRPIEVFMCSVVMRQGYGEGIRWLSQYV</sequence>
<evidence type="ECO:0000250" key="1"/>
<evidence type="ECO:0000305" key="2"/>
<name>SAR1_ASPCL</name>
<gene>
    <name type="primary">sar1</name>
    <name type="ORF">ACLA_029700</name>
</gene>
<dbReference type="EC" id="3.6.5.-"/>
<dbReference type="EMBL" id="DS027059">
    <property type="protein sequence ID" value="EAW08240.1"/>
    <property type="molecule type" value="Genomic_DNA"/>
</dbReference>
<dbReference type="RefSeq" id="XP_001269666.1">
    <property type="nucleotide sequence ID" value="XM_001269665.1"/>
</dbReference>
<dbReference type="SMR" id="A1CRG9"/>
<dbReference type="STRING" id="344612.A1CRG9"/>
<dbReference type="EnsemblFungi" id="EAW08240">
    <property type="protein sequence ID" value="EAW08240"/>
    <property type="gene ID" value="ACLA_029700"/>
</dbReference>
<dbReference type="GeneID" id="4700605"/>
<dbReference type="KEGG" id="act:ACLA_029700"/>
<dbReference type="VEuPathDB" id="FungiDB:ACLA_029700"/>
<dbReference type="eggNOG" id="KOG0077">
    <property type="taxonomic scope" value="Eukaryota"/>
</dbReference>
<dbReference type="HOGENOM" id="CLU_040729_6_0_1"/>
<dbReference type="OMA" id="GLWNKHG"/>
<dbReference type="OrthoDB" id="2011769at2759"/>
<dbReference type="Proteomes" id="UP000006701">
    <property type="component" value="Unassembled WGS sequence"/>
</dbReference>
<dbReference type="GO" id="GO:0030127">
    <property type="term" value="C:COPII vesicle coat"/>
    <property type="evidence" value="ECO:0007669"/>
    <property type="project" value="EnsemblFungi"/>
</dbReference>
<dbReference type="GO" id="GO:0070971">
    <property type="term" value="C:endoplasmic reticulum exit site"/>
    <property type="evidence" value="ECO:0007669"/>
    <property type="project" value="EnsemblFungi"/>
</dbReference>
<dbReference type="GO" id="GO:0005789">
    <property type="term" value="C:endoplasmic reticulum membrane"/>
    <property type="evidence" value="ECO:0007669"/>
    <property type="project" value="UniProtKB-SubCell"/>
</dbReference>
<dbReference type="GO" id="GO:0000139">
    <property type="term" value="C:Golgi membrane"/>
    <property type="evidence" value="ECO:0007669"/>
    <property type="project" value="UniProtKB-SubCell"/>
</dbReference>
<dbReference type="GO" id="GO:0044233">
    <property type="term" value="C:mitochondria-associated endoplasmic reticulum membrane contact site"/>
    <property type="evidence" value="ECO:0007669"/>
    <property type="project" value="EnsemblFungi"/>
</dbReference>
<dbReference type="GO" id="GO:0005739">
    <property type="term" value="C:mitochondrion"/>
    <property type="evidence" value="ECO:0007669"/>
    <property type="project" value="GOC"/>
</dbReference>
<dbReference type="GO" id="GO:0005525">
    <property type="term" value="F:GTP binding"/>
    <property type="evidence" value="ECO:0007669"/>
    <property type="project" value="UniProtKB-KW"/>
</dbReference>
<dbReference type="GO" id="GO:0003924">
    <property type="term" value="F:GTPase activity"/>
    <property type="evidence" value="ECO:0007669"/>
    <property type="project" value="EnsemblFungi"/>
</dbReference>
<dbReference type="GO" id="GO:0090158">
    <property type="term" value="P:endoplasmic reticulum membrane organization"/>
    <property type="evidence" value="ECO:0007669"/>
    <property type="project" value="EnsemblFungi"/>
</dbReference>
<dbReference type="GO" id="GO:0006888">
    <property type="term" value="P:endoplasmic reticulum to Golgi vesicle-mediated transport"/>
    <property type="evidence" value="ECO:0007669"/>
    <property type="project" value="EnsemblFungi"/>
</dbReference>
<dbReference type="GO" id="GO:0006886">
    <property type="term" value="P:intracellular protein transport"/>
    <property type="evidence" value="ECO:0007669"/>
    <property type="project" value="InterPro"/>
</dbReference>
<dbReference type="GO" id="GO:0000266">
    <property type="term" value="P:mitochondrial fission"/>
    <property type="evidence" value="ECO:0007669"/>
    <property type="project" value="EnsemblFungi"/>
</dbReference>
<dbReference type="GO" id="GO:0007006">
    <property type="term" value="P:mitochondrial membrane organization"/>
    <property type="evidence" value="ECO:0007669"/>
    <property type="project" value="EnsemblFungi"/>
</dbReference>
<dbReference type="GO" id="GO:0006998">
    <property type="term" value="P:nuclear envelope organization"/>
    <property type="evidence" value="ECO:0007669"/>
    <property type="project" value="EnsemblFungi"/>
</dbReference>
<dbReference type="GO" id="GO:1902953">
    <property type="term" value="P:positive regulation of ER to Golgi vesicle-mediated transport"/>
    <property type="evidence" value="ECO:0007669"/>
    <property type="project" value="EnsemblFungi"/>
</dbReference>
<dbReference type="GO" id="GO:0070863">
    <property type="term" value="P:positive regulation of protein exit from endoplasmic reticulum"/>
    <property type="evidence" value="ECO:0007669"/>
    <property type="project" value="EnsemblFungi"/>
</dbReference>
<dbReference type="GO" id="GO:0003400">
    <property type="term" value="P:regulation of COPII vesicle coating"/>
    <property type="evidence" value="ECO:0007669"/>
    <property type="project" value="EnsemblFungi"/>
</dbReference>
<dbReference type="GO" id="GO:0016050">
    <property type="term" value="P:vesicle organization"/>
    <property type="evidence" value="ECO:0007669"/>
    <property type="project" value="EnsemblFungi"/>
</dbReference>
<dbReference type="CDD" id="cd00879">
    <property type="entry name" value="Sar1"/>
    <property type="match status" value="1"/>
</dbReference>
<dbReference type="FunFam" id="3.40.50.300:FF:000161">
    <property type="entry name" value="Small COPII coat GTPase"/>
    <property type="match status" value="1"/>
</dbReference>
<dbReference type="Gene3D" id="3.40.50.300">
    <property type="entry name" value="P-loop containing nucleotide triphosphate hydrolases"/>
    <property type="match status" value="1"/>
</dbReference>
<dbReference type="InterPro" id="IPR027417">
    <property type="entry name" value="P-loop_NTPase"/>
</dbReference>
<dbReference type="InterPro" id="IPR005225">
    <property type="entry name" value="Small_GTP-bd"/>
</dbReference>
<dbReference type="InterPro" id="IPR006689">
    <property type="entry name" value="Small_GTPase_ARF/SAR"/>
</dbReference>
<dbReference type="InterPro" id="IPR006687">
    <property type="entry name" value="Small_GTPase_SAR1"/>
</dbReference>
<dbReference type="NCBIfam" id="TIGR00231">
    <property type="entry name" value="small_GTP"/>
    <property type="match status" value="1"/>
</dbReference>
<dbReference type="PANTHER" id="PTHR45684">
    <property type="entry name" value="RE74312P"/>
    <property type="match status" value="1"/>
</dbReference>
<dbReference type="Pfam" id="PF00025">
    <property type="entry name" value="Arf"/>
    <property type="match status" value="1"/>
</dbReference>
<dbReference type="PRINTS" id="PR00328">
    <property type="entry name" value="SAR1GTPBP"/>
</dbReference>
<dbReference type="SMART" id="SM00177">
    <property type="entry name" value="ARF"/>
    <property type="match status" value="1"/>
</dbReference>
<dbReference type="SMART" id="SM00178">
    <property type="entry name" value="SAR"/>
    <property type="match status" value="1"/>
</dbReference>
<dbReference type="SUPFAM" id="SSF52540">
    <property type="entry name" value="P-loop containing nucleoside triphosphate hydrolases"/>
    <property type="match status" value="1"/>
</dbReference>
<dbReference type="PROSITE" id="PS51422">
    <property type="entry name" value="SAR1"/>
    <property type="match status" value="1"/>
</dbReference>
<protein>
    <recommendedName>
        <fullName>Small COPII coat GTPase sar1</fullName>
        <ecNumber>3.6.5.-</ecNumber>
    </recommendedName>
</protein>
<accession>A1CRG9</accession>